<evidence type="ECO:0000256" key="1">
    <source>
        <dbReference type="SAM" id="MobiDB-lite"/>
    </source>
</evidence>
<evidence type="ECO:0000303" key="2">
    <source>
    </source>
</evidence>
<evidence type="ECO:0000305" key="3"/>
<dbReference type="EMBL" id="CR545463">
    <property type="status" value="NOT_ANNOTATED_CDS"/>
    <property type="molecule type" value="Genomic_DNA"/>
</dbReference>
<dbReference type="EMBL" id="AP000529">
    <property type="status" value="NOT_ANNOTATED_CDS"/>
    <property type="molecule type" value="Genomic_DNA"/>
</dbReference>
<dbReference type="EMBL" id="AY466021">
    <property type="protein sequence ID" value="AAS58873.1"/>
    <property type="molecule type" value="mRNA"/>
</dbReference>
<dbReference type="CCDS" id="CCDS74808.1">
    <molecule id="Q6S545-1"/>
</dbReference>
<dbReference type="RefSeq" id="NP_001129685.1">
    <molecule id="Q6S545-1"/>
    <property type="nucleotide sequence ID" value="NM_001136213.1"/>
</dbReference>
<dbReference type="SMR" id="Q6S545"/>
<dbReference type="BioGRID" id="117283">
    <property type="interactions" value="1"/>
</dbReference>
<dbReference type="FunCoup" id="Q6S545">
    <property type="interactions" value="1"/>
</dbReference>
<dbReference type="IntAct" id="Q6S545">
    <property type="interactions" value="2"/>
</dbReference>
<dbReference type="STRING" id="9606.ENSP00000340610"/>
<dbReference type="iPTMnet" id="Q6S545"/>
<dbReference type="PhosphoSitePlus" id="Q6S545"/>
<dbReference type="BioMuta" id="POTEH"/>
<dbReference type="DMDM" id="166898062"/>
<dbReference type="jPOST" id="Q6S545"/>
<dbReference type="MassIVE" id="Q6S545"/>
<dbReference type="PaxDb" id="9606-ENSP00000340610"/>
<dbReference type="PeptideAtlas" id="Q6S545"/>
<dbReference type="ProteomicsDB" id="67334">
    <molecule id="Q6S545-1"/>
</dbReference>
<dbReference type="Antibodypedia" id="22601">
    <property type="antibodies" value="116 antibodies from 23 providers"/>
</dbReference>
<dbReference type="DNASU" id="23784"/>
<dbReference type="Ensembl" id="ENST00000343518.11">
    <molecule id="Q6S545-1"/>
    <property type="protein sequence ID" value="ENSP00000340610.6"/>
    <property type="gene ID" value="ENSG00000198062.16"/>
</dbReference>
<dbReference type="GeneID" id="23784"/>
<dbReference type="KEGG" id="hsa:23784"/>
<dbReference type="MANE-Select" id="ENST00000343518.11">
    <property type="protein sequence ID" value="ENSP00000340610.6"/>
    <property type="RefSeq nucleotide sequence ID" value="NM_001136213.1"/>
    <property type="RefSeq protein sequence ID" value="NP_001129685.1"/>
</dbReference>
<dbReference type="UCSC" id="uc010gqp.3">
    <molecule id="Q6S545-1"/>
    <property type="organism name" value="human"/>
</dbReference>
<dbReference type="AGR" id="HGNC:133"/>
<dbReference type="CTD" id="23784"/>
<dbReference type="GeneCards" id="POTEH"/>
<dbReference type="HGNC" id="HGNC:133">
    <property type="gene designation" value="POTEH"/>
</dbReference>
<dbReference type="HPA" id="ENSG00000198062">
    <property type="expression patterns" value="Tissue enhanced (prostate)"/>
</dbReference>
<dbReference type="MIM" id="608913">
    <property type="type" value="gene"/>
</dbReference>
<dbReference type="neXtProt" id="NX_Q6S545"/>
<dbReference type="OpenTargets" id="ENSG00000198062"/>
<dbReference type="PharmGKB" id="PA24458"/>
<dbReference type="VEuPathDB" id="HostDB:ENSG00000198062"/>
<dbReference type="eggNOG" id="KOG0676">
    <property type="taxonomic scope" value="Eukaryota"/>
</dbReference>
<dbReference type="GeneTree" id="ENSGT00940000163068"/>
<dbReference type="HOGENOM" id="CLU_000134_9_2_1"/>
<dbReference type="InParanoid" id="Q6S545"/>
<dbReference type="OMA" id="TDVNKMD"/>
<dbReference type="OrthoDB" id="9537854at2759"/>
<dbReference type="PAN-GO" id="Q6S545">
    <property type="GO annotations" value="0 GO annotations based on evolutionary models"/>
</dbReference>
<dbReference type="PhylomeDB" id="Q6S545"/>
<dbReference type="TreeFam" id="TF337879"/>
<dbReference type="PathwayCommons" id="Q6S545"/>
<dbReference type="SignaLink" id="Q6S545"/>
<dbReference type="BioGRID-ORCS" id="23784">
    <property type="hits" value="32 hits in 676 CRISPR screens"/>
</dbReference>
<dbReference type="GenomeRNAi" id="23784"/>
<dbReference type="Pharos" id="Q6S545">
    <property type="development level" value="Tdark"/>
</dbReference>
<dbReference type="PRO" id="PR:Q6S545"/>
<dbReference type="Proteomes" id="UP000005640">
    <property type="component" value="Chromosome 22"/>
</dbReference>
<dbReference type="RNAct" id="Q6S545">
    <property type="molecule type" value="protein"/>
</dbReference>
<dbReference type="Bgee" id="ENSG00000198062">
    <property type="expression patterns" value="Expressed in male germ line stem cell (sensu Vertebrata) in testis and 7 other cell types or tissues"/>
</dbReference>
<dbReference type="ExpressionAtlas" id="Q6S545">
    <property type="expression patterns" value="baseline and differential"/>
</dbReference>
<dbReference type="Gene3D" id="1.25.40.20">
    <property type="entry name" value="Ankyrin repeat-containing domain"/>
    <property type="match status" value="1"/>
</dbReference>
<dbReference type="InterPro" id="IPR050657">
    <property type="entry name" value="Ankyrin_repeat_domain"/>
</dbReference>
<dbReference type="InterPro" id="IPR002110">
    <property type="entry name" value="Ankyrin_rpt"/>
</dbReference>
<dbReference type="InterPro" id="IPR036770">
    <property type="entry name" value="Ankyrin_rpt-contain_sf"/>
</dbReference>
<dbReference type="PANTHER" id="PTHR24147">
    <property type="entry name" value="ANKYRIN REPEAT DOMAIN 36-RELATED"/>
    <property type="match status" value="1"/>
</dbReference>
<dbReference type="PANTHER" id="PTHR24147:SF66">
    <property type="entry name" value="POTE ANKYRIN DOMAIN FAMILY MEMBER D"/>
    <property type="match status" value="1"/>
</dbReference>
<dbReference type="Pfam" id="PF12796">
    <property type="entry name" value="Ank_2"/>
    <property type="match status" value="2"/>
</dbReference>
<dbReference type="PRINTS" id="PR01415">
    <property type="entry name" value="ANKYRIN"/>
</dbReference>
<dbReference type="SMART" id="SM00248">
    <property type="entry name" value="ANK"/>
    <property type="match status" value="6"/>
</dbReference>
<dbReference type="SUPFAM" id="SSF48403">
    <property type="entry name" value="Ankyrin repeat"/>
    <property type="match status" value="1"/>
</dbReference>
<dbReference type="PROSITE" id="PS50297">
    <property type="entry name" value="ANK_REP_REGION"/>
    <property type="match status" value="1"/>
</dbReference>
<dbReference type="PROSITE" id="PS50088">
    <property type="entry name" value="ANK_REPEAT"/>
    <property type="match status" value="4"/>
</dbReference>
<sequence length="545" mass="60965">MVAEAGSMPAASSVKKPFGLRSKMGKWCRHCFAWCRGSGKSNVGTSGDHDDSAMKTLRSKMGKWCCHCFPWCRGSGKSNVGTSGDHDDSAMKTLRSKMGKWCCHCFPCCRGSGKSNVGTSGDHDDSAMKTLRSKMGKWCCHCFPCCRGSGKNKVGPWGDYDDSAFMEPRYHVRREDLDKLHRAAWWGKVPRKDLIVMLKDTDMNKKDKQKRTALHLASANGNSEVVKLLLDRRCQLNILDNKKRTALTKAVQCQEDECALMLLEHGTDPNIPDEYGNTALHYAIYNEDKLMAKALLLYGADIESKNKHGLTPLLLGVHEQKQQVVKFLIKKKANLNALDRYGRTALILAVCCGSASIVSLLLEQNIDVSSQDLSGQTAREYAVSSRHNVICQLLSDYKEKQILKVSSENSNPEQDLKLTSEEESQRLKGSENSQPEEMSQEPEINKGGDRKVEEEMKKHGSTHMGFPENLTNGATADNGDDGLIPPRKSRTPESQQFPDTENEQYHSDEQNDTQKQLSEEQNTGILQDEILIHEEKQIEVAENEF</sequence>
<protein>
    <recommendedName>
        <fullName>POTE ankyrin domain family member H</fullName>
    </recommendedName>
    <alternativeName>
        <fullName>ANKRD26-like family C member 3</fullName>
    </alternativeName>
    <alternativeName>
        <fullName>Prostate, ovary, testis-expressed protein on chromosome 22</fullName>
        <shortName>POTE-22</shortName>
    </alternativeName>
</protein>
<organism>
    <name type="scientific">Homo sapiens</name>
    <name type="common">Human</name>
    <dbReference type="NCBI Taxonomy" id="9606"/>
    <lineage>
        <taxon>Eukaryota</taxon>
        <taxon>Metazoa</taxon>
        <taxon>Chordata</taxon>
        <taxon>Craniata</taxon>
        <taxon>Vertebrata</taxon>
        <taxon>Euteleostomi</taxon>
        <taxon>Mammalia</taxon>
        <taxon>Eutheria</taxon>
        <taxon>Euarchontoglires</taxon>
        <taxon>Primates</taxon>
        <taxon>Haplorrhini</taxon>
        <taxon>Catarrhini</taxon>
        <taxon>Hominidae</taxon>
        <taxon>Homo</taxon>
    </lineage>
</organism>
<comment type="alternative products">
    <event type="alternative splicing"/>
    <isoform>
        <id>Q6S545-1</id>
        <name>1</name>
        <sequence type="displayed"/>
    </isoform>
    <isoform>
        <id>Q6S545-2</id>
        <name>2</name>
        <sequence type="described" ref="VSP_039738"/>
    </isoform>
</comment>
<comment type="similarity">
    <text evidence="3">Belongs to the POTE family.</text>
</comment>
<reference key="1">
    <citation type="journal article" date="1999" name="Nature">
        <title>The DNA sequence of human chromosome 22.</title>
        <authorList>
            <person name="Dunham I."/>
            <person name="Hunt A.R."/>
            <person name="Collins J.E."/>
            <person name="Bruskiewich R."/>
            <person name="Beare D.M."/>
            <person name="Clamp M."/>
            <person name="Smink L.J."/>
            <person name="Ainscough R."/>
            <person name="Almeida J.P."/>
            <person name="Babbage A.K."/>
            <person name="Bagguley C."/>
            <person name="Bailey J."/>
            <person name="Barlow K.F."/>
            <person name="Bates K.N."/>
            <person name="Beasley O.P."/>
            <person name="Bird C.P."/>
            <person name="Blakey S.E."/>
            <person name="Bridgeman A.M."/>
            <person name="Buck D."/>
            <person name="Burgess J."/>
            <person name="Burrill W.D."/>
            <person name="Burton J."/>
            <person name="Carder C."/>
            <person name="Carter N.P."/>
            <person name="Chen Y."/>
            <person name="Clark G."/>
            <person name="Clegg S.M."/>
            <person name="Cobley V.E."/>
            <person name="Cole C.G."/>
            <person name="Collier R.E."/>
            <person name="Connor R."/>
            <person name="Conroy D."/>
            <person name="Corby N.R."/>
            <person name="Coville G.J."/>
            <person name="Cox A.V."/>
            <person name="Davis J."/>
            <person name="Dawson E."/>
            <person name="Dhami P.D."/>
            <person name="Dockree C."/>
            <person name="Dodsworth S.J."/>
            <person name="Durbin R.M."/>
            <person name="Ellington A.G."/>
            <person name="Evans K.L."/>
            <person name="Fey J.M."/>
            <person name="Fleming K."/>
            <person name="French L."/>
            <person name="Garner A.A."/>
            <person name="Gilbert J.G.R."/>
            <person name="Goward M.E."/>
            <person name="Grafham D.V."/>
            <person name="Griffiths M.N.D."/>
            <person name="Hall C."/>
            <person name="Hall R.E."/>
            <person name="Hall-Tamlyn G."/>
            <person name="Heathcott R.W."/>
            <person name="Ho S."/>
            <person name="Holmes S."/>
            <person name="Hunt S.E."/>
            <person name="Jones M.C."/>
            <person name="Kershaw J."/>
            <person name="Kimberley A.M."/>
            <person name="King A."/>
            <person name="Laird G.K."/>
            <person name="Langford C.F."/>
            <person name="Leversha M.A."/>
            <person name="Lloyd C."/>
            <person name="Lloyd D.M."/>
            <person name="Martyn I.D."/>
            <person name="Mashreghi-Mohammadi M."/>
            <person name="Matthews L.H."/>
            <person name="Mccann O.T."/>
            <person name="Mcclay J."/>
            <person name="Mclaren S."/>
            <person name="McMurray A.A."/>
            <person name="Milne S.A."/>
            <person name="Mortimore B.J."/>
            <person name="Odell C.N."/>
            <person name="Pavitt R."/>
            <person name="Pearce A.V."/>
            <person name="Pearson D."/>
            <person name="Phillimore B.J.C.T."/>
            <person name="Phillips S.H."/>
            <person name="Plumb R.W."/>
            <person name="Ramsay H."/>
            <person name="Ramsey Y."/>
            <person name="Rogers L."/>
            <person name="Ross M.T."/>
            <person name="Scott C.E."/>
            <person name="Sehra H.K."/>
            <person name="Skuce C.D."/>
            <person name="Smalley S."/>
            <person name="Smith M.L."/>
            <person name="Soderlund C."/>
            <person name="Spragon L."/>
            <person name="Steward C.A."/>
            <person name="Sulston J.E."/>
            <person name="Swann R.M."/>
            <person name="Vaudin M."/>
            <person name="Wall M."/>
            <person name="Wallis J.M."/>
            <person name="Whiteley M.N."/>
            <person name="Willey D.L."/>
            <person name="Williams L."/>
            <person name="Williams S.A."/>
            <person name="Williamson H."/>
            <person name="Wilmer T.E."/>
            <person name="Wilming L."/>
            <person name="Wright C.L."/>
            <person name="Hubbard T."/>
            <person name="Bentley D.R."/>
            <person name="Beck S."/>
            <person name="Rogers J."/>
            <person name="Shimizu N."/>
            <person name="Minoshima S."/>
            <person name="Kawasaki K."/>
            <person name="Sasaki T."/>
            <person name="Asakawa S."/>
            <person name="Kudoh J."/>
            <person name="Shintani A."/>
            <person name="Shibuya K."/>
            <person name="Yoshizaki Y."/>
            <person name="Aoki N."/>
            <person name="Mitsuyama S."/>
            <person name="Roe B.A."/>
            <person name="Chen F."/>
            <person name="Chu L."/>
            <person name="Crabtree J."/>
            <person name="Deschamps S."/>
            <person name="Do A."/>
            <person name="Do T."/>
            <person name="Dorman A."/>
            <person name="Fang F."/>
            <person name="Fu Y."/>
            <person name="Hu P."/>
            <person name="Hua A."/>
            <person name="Kenton S."/>
            <person name="Lai H."/>
            <person name="Lao H.I."/>
            <person name="Lewis J."/>
            <person name="Lewis S."/>
            <person name="Lin S.-P."/>
            <person name="Loh P."/>
            <person name="Malaj E."/>
            <person name="Nguyen T."/>
            <person name="Pan H."/>
            <person name="Phan S."/>
            <person name="Qi S."/>
            <person name="Qian Y."/>
            <person name="Ray L."/>
            <person name="Ren Q."/>
            <person name="Shaull S."/>
            <person name="Sloan D."/>
            <person name="Song L."/>
            <person name="Wang Q."/>
            <person name="Wang Y."/>
            <person name="Wang Z."/>
            <person name="White J."/>
            <person name="Willingham D."/>
            <person name="Wu H."/>
            <person name="Yao Z."/>
            <person name="Zhan M."/>
            <person name="Zhang G."/>
            <person name="Chissoe S."/>
            <person name="Murray J."/>
            <person name="Miller N."/>
            <person name="Minx P."/>
            <person name="Fulton R."/>
            <person name="Johnson D."/>
            <person name="Bemis G."/>
            <person name="Bentley D."/>
            <person name="Bradshaw H."/>
            <person name="Bourne S."/>
            <person name="Cordes M."/>
            <person name="Du Z."/>
            <person name="Fulton L."/>
            <person name="Goela D."/>
            <person name="Graves T."/>
            <person name="Hawkins J."/>
            <person name="Hinds K."/>
            <person name="Kemp K."/>
            <person name="Latreille P."/>
            <person name="Layman D."/>
            <person name="Ozersky P."/>
            <person name="Rohlfing T."/>
            <person name="Scheet P."/>
            <person name="Walker C."/>
            <person name="Wamsley A."/>
            <person name="Wohldmann P."/>
            <person name="Pepin K."/>
            <person name="Nelson J."/>
            <person name="Korf I."/>
            <person name="Bedell J.A."/>
            <person name="Hillier L.W."/>
            <person name="Mardis E."/>
            <person name="Waterston R."/>
            <person name="Wilson R."/>
            <person name="Emanuel B.S."/>
            <person name="Shaikh T."/>
            <person name="Kurahashi H."/>
            <person name="Saitta S."/>
            <person name="Budarf M.L."/>
            <person name="McDermid H.E."/>
            <person name="Johnson A."/>
            <person name="Wong A.C.C."/>
            <person name="Morrow B.E."/>
            <person name="Edelmann L."/>
            <person name="Kim U.J."/>
            <person name="Shizuya H."/>
            <person name="Simon M.I."/>
            <person name="Dumanski J.P."/>
            <person name="Peyrard M."/>
            <person name="Kedra D."/>
            <person name="Seroussi E."/>
            <person name="Fransson I."/>
            <person name="Tapia I."/>
            <person name="Bruder C.E."/>
            <person name="O'Brien K.P."/>
            <person name="Wilkinson P."/>
            <person name="Bodenteich A."/>
            <person name="Hartman K."/>
            <person name="Hu X."/>
            <person name="Khan A.S."/>
            <person name="Lane L."/>
            <person name="Tilahun Y."/>
            <person name="Wright H."/>
        </authorList>
    </citation>
    <scope>NUCLEOTIDE SEQUENCE [LARGE SCALE GENOMIC DNA]</scope>
</reference>
<reference key="2">
    <citation type="journal article" date="2004" name="Gene">
        <title>Five POTE paralogs and their splice variants are expressed in human prostate and encode proteins of different lengths.</title>
        <authorList>
            <person name="Bera T.K."/>
            <person name="Huynh N."/>
            <person name="Maeda H."/>
            <person name="Sathyanarayana B.K."/>
            <person name="Lee B."/>
            <person name="Pastan I."/>
        </authorList>
    </citation>
    <scope>NUCLEOTIDE SEQUENCE [MRNA] (ISOFORM 2)</scope>
    <source>
        <tissue>Prostate</tissue>
    </source>
</reference>
<accession>Q6S545</accession>
<accession>A2CEK4</accession>
<accession>A6NCI1</accession>
<accession>A9Z1W0</accession>
<keyword id="KW-0025">Alternative splicing</keyword>
<keyword id="KW-0040">ANK repeat</keyword>
<keyword id="KW-1185">Reference proteome</keyword>
<keyword id="KW-0677">Repeat</keyword>
<proteinExistence type="evidence at transcript level"/>
<gene>
    <name type="primary">POTEH</name>
    <name type="synonym">A26C3</name>
    <name type="synonym">ACTBL1</name>
    <name type="synonym">POTE22</name>
</gene>
<name>POTEH_HUMAN</name>
<feature type="chain" id="PRO_0000066918" description="POTE ankyrin domain family member H">
    <location>
        <begin position="1"/>
        <end position="545"/>
    </location>
</feature>
<feature type="repeat" description="ANK 1">
    <location>
        <begin position="180"/>
        <end position="208"/>
    </location>
</feature>
<feature type="repeat" description="ANK 2">
    <location>
        <begin position="209"/>
        <end position="238"/>
    </location>
</feature>
<feature type="repeat" description="ANK 3">
    <location>
        <begin position="242"/>
        <end position="271"/>
    </location>
</feature>
<feature type="repeat" description="ANK 4">
    <location>
        <begin position="275"/>
        <end position="304"/>
    </location>
</feature>
<feature type="repeat" description="ANK 5">
    <location>
        <begin position="308"/>
        <end position="337"/>
    </location>
</feature>
<feature type="repeat" description="ANK 6">
    <location>
        <begin position="341"/>
        <end position="370"/>
    </location>
</feature>
<feature type="repeat" description="ANK 7">
    <location>
        <begin position="374"/>
        <end position="404"/>
    </location>
</feature>
<feature type="region of interest" description="Disordered" evidence="1">
    <location>
        <begin position="406"/>
        <end position="524"/>
    </location>
</feature>
<feature type="compositionally biased region" description="Basic and acidic residues" evidence="1">
    <location>
        <begin position="414"/>
        <end position="429"/>
    </location>
</feature>
<feature type="compositionally biased region" description="Basic and acidic residues" evidence="1">
    <location>
        <begin position="443"/>
        <end position="458"/>
    </location>
</feature>
<feature type="compositionally biased region" description="Polar residues" evidence="1">
    <location>
        <begin position="513"/>
        <end position="524"/>
    </location>
</feature>
<feature type="splice variant" id="VSP_039738" description="In isoform 2." evidence="2">
    <location>
        <begin position="289"/>
        <end position="545"/>
    </location>
</feature>
<feature type="sequence conflict" description="In Ref. 2; AAS58873." evidence="3" ref="2">
    <original>I</original>
    <variation>V</variation>
    <location>
        <position position="238"/>
    </location>
</feature>